<protein>
    <recommendedName>
        <fullName evidence="3">Glycine betaine transporter</fullName>
    </recommendedName>
</protein>
<organism>
    <name type="scientific">Acinetobacter baylyi (strain ATCC 33305 / BD413 / ADP1)</name>
    <dbReference type="NCBI Taxonomy" id="62977"/>
    <lineage>
        <taxon>Bacteria</taxon>
        <taxon>Pseudomonadati</taxon>
        <taxon>Pseudomonadota</taxon>
        <taxon>Gammaproteobacteria</taxon>
        <taxon>Moraxellales</taxon>
        <taxon>Moraxellaceae</taxon>
        <taxon>Acinetobacter</taxon>
    </lineage>
</organism>
<dbReference type="EMBL" id="CR543861">
    <property type="protein sequence ID" value="CAG70111.1"/>
    <property type="molecule type" value="Genomic_DNA"/>
</dbReference>
<dbReference type="RefSeq" id="WP_004923472.1">
    <property type="nucleotide sequence ID" value="NC_005966.1"/>
</dbReference>
<dbReference type="SMR" id="Q6F754"/>
<dbReference type="STRING" id="202950.GCA_001485005_01744"/>
<dbReference type="TCDB" id="2.A.15.1.9">
    <property type="family name" value="the betaine/carnitine/choline transporter (bcct) family"/>
</dbReference>
<dbReference type="GeneID" id="45235645"/>
<dbReference type="KEGG" id="aci:ACIAD3460"/>
<dbReference type="eggNOG" id="COG1292">
    <property type="taxonomic scope" value="Bacteria"/>
</dbReference>
<dbReference type="HOGENOM" id="CLU_010118_3_1_6"/>
<dbReference type="OrthoDB" id="9775735at2"/>
<dbReference type="BioCyc" id="ASP62977:ACIAD_RS15655-MONOMER"/>
<dbReference type="Proteomes" id="UP000000430">
    <property type="component" value="Chromosome"/>
</dbReference>
<dbReference type="GO" id="GO:0005886">
    <property type="term" value="C:plasma membrane"/>
    <property type="evidence" value="ECO:0007669"/>
    <property type="project" value="UniProtKB-SubCell"/>
</dbReference>
<dbReference type="GO" id="GO:0022857">
    <property type="term" value="F:transmembrane transporter activity"/>
    <property type="evidence" value="ECO:0007669"/>
    <property type="project" value="InterPro"/>
</dbReference>
<dbReference type="InterPro" id="IPR018093">
    <property type="entry name" value="BCCT_CS"/>
</dbReference>
<dbReference type="InterPro" id="IPR000060">
    <property type="entry name" value="BCCT_transptr"/>
</dbReference>
<dbReference type="NCBIfam" id="TIGR00842">
    <property type="entry name" value="bcct"/>
    <property type="match status" value="1"/>
</dbReference>
<dbReference type="NCBIfam" id="NF007399">
    <property type="entry name" value="PRK09928.1"/>
    <property type="match status" value="1"/>
</dbReference>
<dbReference type="PANTHER" id="PTHR30047:SF7">
    <property type="entry name" value="HIGH-AFFINITY CHOLINE TRANSPORT PROTEIN"/>
    <property type="match status" value="1"/>
</dbReference>
<dbReference type="PANTHER" id="PTHR30047">
    <property type="entry name" value="HIGH-AFFINITY CHOLINE TRANSPORT PROTEIN-RELATED"/>
    <property type="match status" value="1"/>
</dbReference>
<dbReference type="Pfam" id="PF02028">
    <property type="entry name" value="BCCT"/>
    <property type="match status" value="1"/>
</dbReference>
<dbReference type="PROSITE" id="PS01303">
    <property type="entry name" value="BCCT"/>
    <property type="match status" value="1"/>
</dbReference>
<comment type="function">
    <text evidence="2">Energy-dependent uptake of glycine betaine in response to high salinity.</text>
</comment>
<comment type="activity regulation">
    <text evidence="2">Uptake is activated by NaCl, KCl or mannose gradients across the cell membrane. Inhibited by the protonophore 3,3',4',5-tetrachlorosalicylanilide (TCS).</text>
</comment>
<comment type="subcellular location">
    <subcellularLocation>
        <location evidence="5">Cell inner membrane</location>
        <topology evidence="1">Multi-pass membrane protein</topology>
    </subcellularLocation>
</comment>
<comment type="disruption phenotype">
    <text evidence="2">Deletion of the gene completely abolishes glycine betaine transport.</text>
</comment>
<comment type="similarity">
    <text evidence="4">Belongs to the BCCT transporter (TC 2.A.15) family.</text>
</comment>
<feature type="chain" id="PRO_0000435020" description="Glycine betaine transporter">
    <location>
        <begin position="1"/>
        <end position="660"/>
    </location>
</feature>
<feature type="topological domain" description="Cytoplasmic" evidence="5">
    <location>
        <begin position="1"/>
        <end position="13"/>
    </location>
</feature>
<feature type="transmembrane region" description="Helical" evidence="1">
    <location>
        <begin position="14"/>
        <end position="34"/>
    </location>
</feature>
<feature type="topological domain" description="Periplasmic" evidence="5">
    <location>
        <begin position="35"/>
        <end position="52"/>
    </location>
</feature>
<feature type="transmembrane region" description="Helical" evidence="1">
    <location>
        <begin position="53"/>
        <end position="73"/>
    </location>
</feature>
<feature type="topological domain" description="Cytoplasmic" evidence="5">
    <location>
        <begin position="74"/>
        <end position="93"/>
    </location>
</feature>
<feature type="transmembrane region" description="Helical" evidence="1">
    <location>
        <begin position="94"/>
        <end position="114"/>
    </location>
</feature>
<feature type="topological domain" description="Periplasmic" evidence="5">
    <location>
        <begin position="115"/>
        <end position="139"/>
    </location>
</feature>
<feature type="transmembrane region" description="Helical" evidence="1">
    <location>
        <begin position="140"/>
        <end position="160"/>
    </location>
</feature>
<feature type="topological domain" description="Cytoplasmic" evidence="5">
    <location>
        <begin position="161"/>
        <end position="195"/>
    </location>
</feature>
<feature type="transmembrane region" description="Helical" evidence="1">
    <location>
        <begin position="196"/>
        <end position="216"/>
    </location>
</feature>
<feature type="topological domain" description="Periplasmic" evidence="5">
    <location>
        <begin position="217"/>
        <end position="230"/>
    </location>
</feature>
<feature type="transmembrane region" description="Helical" evidence="1">
    <location>
        <begin position="231"/>
        <end position="251"/>
    </location>
</feature>
<feature type="topological domain" description="Cytoplasmic" evidence="5">
    <location>
        <begin position="252"/>
        <end position="263"/>
    </location>
</feature>
<feature type="transmembrane region" description="Helical" evidence="1">
    <location>
        <begin position="264"/>
        <end position="284"/>
    </location>
</feature>
<feature type="topological domain" description="Periplasmic" evidence="5">
    <location>
        <begin position="285"/>
        <end position="316"/>
    </location>
</feature>
<feature type="transmembrane region" description="Helical" evidence="1">
    <location>
        <begin position="317"/>
        <end position="337"/>
    </location>
</feature>
<feature type="topological domain" description="Cytoplasmic" evidence="5">
    <location>
        <begin position="338"/>
        <end position="347"/>
    </location>
</feature>
<feature type="transmembrane region" description="Helical" evidence="1">
    <location>
        <begin position="348"/>
        <end position="368"/>
    </location>
</feature>
<feature type="topological domain" description="Periplasmic" evidence="5">
    <location>
        <begin position="369"/>
        <end position="401"/>
    </location>
</feature>
<feature type="transmembrane region" description="Helical" evidence="1">
    <location>
        <begin position="402"/>
        <end position="422"/>
    </location>
</feature>
<feature type="topological domain" description="Cytoplasmic" evidence="5">
    <location>
        <begin position="423"/>
        <end position="446"/>
    </location>
</feature>
<feature type="transmembrane region" description="Helical" evidence="1">
    <location>
        <begin position="447"/>
        <end position="467"/>
    </location>
</feature>
<feature type="topological domain" description="Periplasmic" evidence="5">
    <location>
        <begin position="468"/>
        <end position="471"/>
    </location>
</feature>
<feature type="transmembrane region" description="Helical" evidence="1">
    <location>
        <begin position="472"/>
        <end position="492"/>
    </location>
</feature>
<feature type="topological domain" description="Cytoplasmic" evidence="5">
    <location>
        <begin position="493"/>
        <end position="660"/>
    </location>
</feature>
<evidence type="ECO:0000255" key="1"/>
<evidence type="ECO:0000269" key="2">
    <source>
    </source>
</evidence>
<evidence type="ECO:0000303" key="3">
    <source>
    </source>
</evidence>
<evidence type="ECO:0000305" key="4"/>
<evidence type="ECO:0000305" key="5">
    <source>
    </source>
</evidence>
<evidence type="ECO:0000312" key="6">
    <source>
        <dbReference type="EMBL" id="CAG70111.1"/>
    </source>
</evidence>
<accession>Q6F754</accession>
<proteinExistence type="evidence at protein level"/>
<name>GBTR_ACIAD</name>
<sequence>MPSKTSSRFANINPNVFVSTIMIIAIFLAIVILAPDAFELLTQQLKNWITESFSWFYVLSVAFFLIVLGYIACSSSGKIKLGPDHSQPDYSNSSWFAMLFTAGMGIGLMFFGIAEPIMHYVSPPSGEPETILAAQQSMRVTFFHWGLHAWGIYAIVALSLSYFAYRHDLPLKIRSSLYPLIGKKIYGPMGDAVDTFATIGTIFGVATTLGFGVTQISSGLNYLFGFEPTSFSKVVLIIIVSAMAALSVGLGLDKGVKRLAELNLVLAVTLLAFVFFTSATVYLLQTTIQNTGQYISNLFEMTFNLYAYQPNGWIGGWTIMYWAWWISWSPFVGMFIARVSRGRTIREFIIGVMLIPTGFTLIWMGFMGNAGLYSILHDGNLSLLNAVQRDSSVALFEFLHSLPFSGVMSLLATVLVVLFFVTSADSGALVVDYLTAKSEDSPVWQRLFWIVVMAGLAIILLLAGGLTALQSATIMSALPFTFIMLLICWGLIKALRIDSTKMQAIQEARTTPRAIQNPRSWQQRLGLIMHYPHSKVEVDAYIKKHVQRAFESLEREFKRRHLTVAISETDDGLQLKVDHHDEINFIYHVVSRETMPPSFMLEQEHNADVEKYFQAEVFLREGGQNYDVMDWTEEDLIQDIIDQYERHLYFLSVMRAQTGN</sequence>
<keyword id="KW-0997">Cell inner membrane</keyword>
<keyword id="KW-1003">Cell membrane</keyword>
<keyword id="KW-0472">Membrane</keyword>
<keyword id="KW-0346">Stress response</keyword>
<keyword id="KW-0812">Transmembrane</keyword>
<keyword id="KW-1133">Transmembrane helix</keyword>
<keyword id="KW-0813">Transport</keyword>
<gene>
    <name evidence="6" type="ordered locus">ACIAD3460</name>
</gene>
<reference key="1">
    <citation type="journal article" date="2004" name="Nucleic Acids Res.">
        <title>Unique features revealed by the genome sequence of Acinetobacter sp. ADP1, a versatile and naturally transformation competent bacterium.</title>
        <authorList>
            <person name="Barbe V."/>
            <person name="Vallenet D."/>
            <person name="Fonknechten N."/>
            <person name="Kreimeyer A."/>
            <person name="Oztas S."/>
            <person name="Labarre L."/>
            <person name="Cruveiller S."/>
            <person name="Robert C."/>
            <person name="Duprat S."/>
            <person name="Wincker P."/>
            <person name="Ornston L.N."/>
            <person name="Weissenbach J."/>
            <person name="Marliere P."/>
            <person name="Cohen G.N."/>
            <person name="Medigue C."/>
        </authorList>
    </citation>
    <scope>NUCLEOTIDE SEQUENCE [LARGE SCALE GENOMIC DNA]</scope>
    <source>
        <strain>ATCC 33305 / BD413 / ADP1</strain>
    </source>
</reference>
<reference key="2">
    <citation type="journal article" date="2011" name="Arch. Microbiol.">
        <title>Salt adaptation in Acinetobacter baylyi: identification and characterization of a secondary glycine betaine transporter.</title>
        <authorList>
            <person name="Sand M."/>
            <person name="de Berardinis V."/>
            <person name="Mingote A."/>
            <person name="Santos H."/>
            <person name="Goettig S."/>
            <person name="Mueller V."/>
            <person name="Averhoff B."/>
        </authorList>
    </citation>
    <scope>FUNCTION AS A TRANSPORTER</scope>
    <scope>SUBCELLULAR LOCATION</scope>
    <scope>ACTIVITY REGULATION</scope>
    <scope>DISRUPTION PHENOTYPE</scope>
    <source>
        <strain>ATCC 33305 / BD413 / ADP1</strain>
    </source>
</reference>